<feature type="propeptide" id="PRO_0000397496" description="Removed in mature form; by autocatalysis" evidence="1">
    <location>
        <begin position="1"/>
        <end position="50"/>
    </location>
</feature>
<feature type="chain" id="PRO_0000397497" description="Proteasome subunit beta">
    <location>
        <begin position="51"/>
        <end position="273"/>
    </location>
</feature>
<feature type="region of interest" description="Disordered" evidence="2">
    <location>
        <begin position="1"/>
        <end position="23"/>
    </location>
</feature>
<feature type="compositionally biased region" description="Polar residues" evidence="2">
    <location>
        <begin position="1"/>
        <end position="19"/>
    </location>
</feature>
<feature type="active site" description="Nucleophile" evidence="1">
    <location>
        <position position="51"/>
    </location>
</feature>
<gene>
    <name evidence="1" type="primary">prcB</name>
    <name type="ordered locus">Achl_1919</name>
</gene>
<name>PSB_PSECP</name>
<comment type="function">
    <text evidence="1">Component of the proteasome core, a large protease complex with broad specificity involved in protein degradation.</text>
</comment>
<comment type="catalytic activity">
    <reaction evidence="1">
        <text>Cleavage of peptide bonds with very broad specificity.</text>
        <dbReference type="EC" id="3.4.25.1"/>
    </reaction>
</comment>
<comment type="activity regulation">
    <text evidence="1">The formation of the proteasomal ATPase ARC-20S proteasome complex, likely via the docking of the C-termini of ARC into the intersubunit pockets in the alpha-rings, may trigger opening of the gate for substrate entry. Interconversion between the open-gate and close-gate conformations leads to a dynamic regulation of the 20S proteasome proteolysis activity.</text>
</comment>
<comment type="pathway">
    <text evidence="1">Protein degradation; proteasomal Pup-dependent pathway.</text>
</comment>
<comment type="subunit">
    <text evidence="1">The 20S proteasome core is composed of 14 alpha and 14 beta subunits that assemble into four stacked heptameric rings, resulting in a barrel-shaped structure. The two inner rings, each composed of seven catalytic beta subunits, are sandwiched by two outer rings, each composed of seven alpha subunits. The catalytic chamber with the active sites is on the inside of the barrel. Has a gated structure, the ends of the cylinder being occluded by the N-termini of the alpha-subunits. Is capped by the proteasome-associated ATPase, ARC.</text>
</comment>
<comment type="subcellular location">
    <subcellularLocation>
        <location evidence="1">Cytoplasm</location>
    </subcellularLocation>
</comment>
<comment type="similarity">
    <text evidence="1">Belongs to the peptidase T1B family.</text>
</comment>
<evidence type="ECO:0000255" key="1">
    <source>
        <dbReference type="HAMAP-Rule" id="MF_02113"/>
    </source>
</evidence>
<evidence type="ECO:0000256" key="2">
    <source>
        <dbReference type="SAM" id="MobiDB-lite"/>
    </source>
</evidence>
<sequence length="273" mass="29024">MQESTANKVAANATSSFTEHLQRDRPELLPFNRSGQGSATAAAPLQVPHATTIVAMSYNGGVLMAGDRRATMGNVIASRHIEKVFPADRYSVLGIAGTAGIAIDLTRLFQVELEHYEKIEGTLLSLEGKANRLGAMIRGNLPLAMQGLAVVPLFAGFDTSAGVGRLFSYDVTGGRYEEHEHHTVGSGSVFARGALKKLWRPNLSAEEAVAVAIEALFDAADDDSATGGPDTVRKLWPVVYTVDSTGTRRVAEPQLAAASQHVIEARTIAGREA</sequence>
<organism>
    <name type="scientific">Pseudarthrobacter chlorophenolicus (strain ATCC 700700 / DSM 12829 / CIP 107037 / JCM 12360 / KCTC 9906 / NCIMB 13794 / A6)</name>
    <name type="common">Arthrobacter chlorophenolicus</name>
    <dbReference type="NCBI Taxonomy" id="452863"/>
    <lineage>
        <taxon>Bacteria</taxon>
        <taxon>Bacillati</taxon>
        <taxon>Actinomycetota</taxon>
        <taxon>Actinomycetes</taxon>
        <taxon>Micrococcales</taxon>
        <taxon>Micrococcaceae</taxon>
        <taxon>Pseudarthrobacter</taxon>
    </lineage>
</organism>
<reference key="1">
    <citation type="submission" date="2009-01" db="EMBL/GenBank/DDBJ databases">
        <title>Complete sequence of chromosome of Arthrobacter chlorophenolicus A6.</title>
        <authorList>
            <consortium name="US DOE Joint Genome Institute"/>
            <person name="Lucas S."/>
            <person name="Copeland A."/>
            <person name="Lapidus A."/>
            <person name="Glavina del Rio T."/>
            <person name="Tice H."/>
            <person name="Bruce D."/>
            <person name="Goodwin L."/>
            <person name="Pitluck S."/>
            <person name="Goltsman E."/>
            <person name="Clum A."/>
            <person name="Larimer F."/>
            <person name="Land M."/>
            <person name="Hauser L."/>
            <person name="Kyrpides N."/>
            <person name="Mikhailova N."/>
            <person name="Jansson J."/>
            <person name="Richardson P."/>
        </authorList>
    </citation>
    <scope>NUCLEOTIDE SEQUENCE [LARGE SCALE GENOMIC DNA]</scope>
    <source>
        <strain>ATCC 700700 / DSM 12829 / CIP 107037 / JCM 12360 / KCTC 9906 / NCIMB 13794 / A6</strain>
    </source>
</reference>
<proteinExistence type="inferred from homology"/>
<keyword id="KW-0068">Autocatalytic cleavage</keyword>
<keyword id="KW-0963">Cytoplasm</keyword>
<keyword id="KW-0378">Hydrolase</keyword>
<keyword id="KW-0645">Protease</keyword>
<keyword id="KW-0647">Proteasome</keyword>
<keyword id="KW-0888">Threonine protease</keyword>
<keyword id="KW-0865">Zymogen</keyword>
<dbReference type="EC" id="3.4.25.1" evidence="1"/>
<dbReference type="EMBL" id="CP001341">
    <property type="protein sequence ID" value="ACL39894.1"/>
    <property type="molecule type" value="Genomic_DNA"/>
</dbReference>
<dbReference type="RefSeq" id="WP_015937114.1">
    <property type="nucleotide sequence ID" value="NC_011886.1"/>
</dbReference>
<dbReference type="SMR" id="B8H8L6"/>
<dbReference type="STRING" id="452863.Achl_1919"/>
<dbReference type="MEROPS" id="T01.005"/>
<dbReference type="KEGG" id="ach:Achl_1919"/>
<dbReference type="eggNOG" id="COG0638">
    <property type="taxonomic scope" value="Bacteria"/>
</dbReference>
<dbReference type="HOGENOM" id="CLU_035750_2_0_11"/>
<dbReference type="OrthoDB" id="5174038at2"/>
<dbReference type="UniPathway" id="UPA00997"/>
<dbReference type="Proteomes" id="UP000002505">
    <property type="component" value="Chromosome"/>
</dbReference>
<dbReference type="GO" id="GO:0005737">
    <property type="term" value="C:cytoplasm"/>
    <property type="evidence" value="ECO:0007669"/>
    <property type="project" value="UniProtKB-SubCell"/>
</dbReference>
<dbReference type="GO" id="GO:0019774">
    <property type="term" value="C:proteasome core complex, beta-subunit complex"/>
    <property type="evidence" value="ECO:0007669"/>
    <property type="project" value="UniProtKB-UniRule"/>
</dbReference>
<dbReference type="GO" id="GO:0004298">
    <property type="term" value="F:threonine-type endopeptidase activity"/>
    <property type="evidence" value="ECO:0007669"/>
    <property type="project" value="UniProtKB-UniRule"/>
</dbReference>
<dbReference type="GO" id="GO:0019941">
    <property type="term" value="P:modification-dependent protein catabolic process"/>
    <property type="evidence" value="ECO:0007669"/>
    <property type="project" value="UniProtKB-UniRule"/>
</dbReference>
<dbReference type="GO" id="GO:0010498">
    <property type="term" value="P:proteasomal protein catabolic process"/>
    <property type="evidence" value="ECO:0007669"/>
    <property type="project" value="UniProtKB-UniRule"/>
</dbReference>
<dbReference type="CDD" id="cd01906">
    <property type="entry name" value="proteasome_protease_HslV"/>
    <property type="match status" value="1"/>
</dbReference>
<dbReference type="Gene3D" id="3.60.20.10">
    <property type="entry name" value="Glutamine Phosphoribosylpyrophosphate, subunit 1, domain 1"/>
    <property type="match status" value="1"/>
</dbReference>
<dbReference type="HAMAP" id="MF_02113_B">
    <property type="entry name" value="Proteasome_B_B"/>
    <property type="match status" value="1"/>
</dbReference>
<dbReference type="InterPro" id="IPR029055">
    <property type="entry name" value="Ntn_hydrolases_N"/>
</dbReference>
<dbReference type="InterPro" id="IPR000243">
    <property type="entry name" value="Pept_T1A_subB"/>
</dbReference>
<dbReference type="InterPro" id="IPR001353">
    <property type="entry name" value="Proteasome_sua/b"/>
</dbReference>
<dbReference type="InterPro" id="IPR023333">
    <property type="entry name" value="Proteasome_suB-type"/>
</dbReference>
<dbReference type="InterPro" id="IPR022483">
    <property type="entry name" value="PSB_actinobac"/>
</dbReference>
<dbReference type="NCBIfam" id="TIGR03690">
    <property type="entry name" value="20S_bact_beta"/>
    <property type="match status" value="1"/>
</dbReference>
<dbReference type="PANTHER" id="PTHR32194:SF0">
    <property type="entry name" value="ATP-DEPENDENT PROTEASE SUBUNIT HSLV"/>
    <property type="match status" value="1"/>
</dbReference>
<dbReference type="PANTHER" id="PTHR32194">
    <property type="entry name" value="METALLOPROTEASE TLDD"/>
    <property type="match status" value="1"/>
</dbReference>
<dbReference type="Pfam" id="PF00227">
    <property type="entry name" value="Proteasome"/>
    <property type="match status" value="1"/>
</dbReference>
<dbReference type="PRINTS" id="PR00141">
    <property type="entry name" value="PROTEASOME"/>
</dbReference>
<dbReference type="SUPFAM" id="SSF56235">
    <property type="entry name" value="N-terminal nucleophile aminohydrolases (Ntn hydrolases)"/>
    <property type="match status" value="1"/>
</dbReference>
<dbReference type="PROSITE" id="PS51476">
    <property type="entry name" value="PROTEASOME_BETA_2"/>
    <property type="match status" value="1"/>
</dbReference>
<protein>
    <recommendedName>
        <fullName evidence="1">Proteasome subunit beta</fullName>
        <ecNumber evidence="1">3.4.25.1</ecNumber>
    </recommendedName>
    <alternativeName>
        <fullName evidence="1">20S proteasome beta subunit</fullName>
    </alternativeName>
    <alternativeName>
        <fullName evidence="1">Proteasome core protein PrcB</fullName>
    </alternativeName>
</protein>
<accession>B8H8L6</accession>